<reference key="1">
    <citation type="journal article" date="2001" name="Nature">
        <title>Genome sequence of enterohaemorrhagic Escherichia coli O157:H7.</title>
        <authorList>
            <person name="Perna N.T."/>
            <person name="Plunkett G. III"/>
            <person name="Burland V."/>
            <person name="Mau B."/>
            <person name="Glasner J.D."/>
            <person name="Rose D.J."/>
            <person name="Mayhew G.F."/>
            <person name="Evans P.S."/>
            <person name="Gregor J."/>
            <person name="Kirkpatrick H.A."/>
            <person name="Posfai G."/>
            <person name="Hackett J."/>
            <person name="Klink S."/>
            <person name="Boutin A."/>
            <person name="Shao Y."/>
            <person name="Miller L."/>
            <person name="Grotbeck E.J."/>
            <person name="Davis N.W."/>
            <person name="Lim A."/>
            <person name="Dimalanta E.T."/>
            <person name="Potamousis K."/>
            <person name="Apodaca J."/>
            <person name="Anantharaman T.S."/>
            <person name="Lin J."/>
            <person name="Yen G."/>
            <person name="Schwartz D.C."/>
            <person name="Welch R.A."/>
            <person name="Blattner F.R."/>
        </authorList>
    </citation>
    <scope>NUCLEOTIDE SEQUENCE [LARGE SCALE GENOMIC DNA]</scope>
    <source>
        <strain>O157:H7 / EDL933 / ATCC 700927 / EHEC</strain>
    </source>
</reference>
<reference key="2">
    <citation type="journal article" date="2001" name="DNA Res.">
        <title>Complete genome sequence of enterohemorrhagic Escherichia coli O157:H7 and genomic comparison with a laboratory strain K-12.</title>
        <authorList>
            <person name="Hayashi T."/>
            <person name="Makino K."/>
            <person name="Ohnishi M."/>
            <person name="Kurokawa K."/>
            <person name="Ishii K."/>
            <person name="Yokoyama K."/>
            <person name="Han C.-G."/>
            <person name="Ohtsubo E."/>
            <person name="Nakayama K."/>
            <person name="Murata T."/>
            <person name="Tanaka M."/>
            <person name="Tobe T."/>
            <person name="Iida T."/>
            <person name="Takami H."/>
            <person name="Honda T."/>
            <person name="Sasakawa C."/>
            <person name="Ogasawara N."/>
            <person name="Yasunaga T."/>
            <person name="Kuhara S."/>
            <person name="Shiba T."/>
            <person name="Hattori M."/>
            <person name="Shinagawa H."/>
        </authorList>
    </citation>
    <scope>NUCLEOTIDE SEQUENCE [LARGE SCALE GENOMIC DNA]</scope>
    <source>
        <strain>O157:H7 / Sakai / RIMD 0509952 / EHEC</strain>
    </source>
</reference>
<name>YKFJ_ECO57</name>
<protein>
    <recommendedName>
        <fullName>Uncharacterized protein YkfJ</fullName>
    </recommendedName>
</protein>
<keyword id="KW-1185">Reference proteome</keyword>
<accession>Q8X7P0</accession>
<sequence length="88" mass="9850">MEWYMGKYIRPLSDAVFTIASDDLWIESLAIQQLHTTANLPNMQRVVGMPDLHPGRGYPIGAAFFSVGRFYPTRRRGNGAGNRNGPLL</sequence>
<gene>
    <name type="primary">ykfJ</name>
    <name type="ordered locus">Z0296</name>
    <name type="ordered locus">ECs0262</name>
</gene>
<proteinExistence type="predicted"/>
<organism>
    <name type="scientific">Escherichia coli O157:H7</name>
    <dbReference type="NCBI Taxonomy" id="83334"/>
    <lineage>
        <taxon>Bacteria</taxon>
        <taxon>Pseudomonadati</taxon>
        <taxon>Pseudomonadota</taxon>
        <taxon>Gammaproteobacteria</taxon>
        <taxon>Enterobacterales</taxon>
        <taxon>Enterobacteriaceae</taxon>
        <taxon>Escherichia</taxon>
    </lineage>
</organism>
<dbReference type="EMBL" id="AE005174">
    <property type="protein sequence ID" value="AAG54560.1"/>
    <property type="molecule type" value="Genomic_DNA"/>
</dbReference>
<dbReference type="EMBL" id="BA000007">
    <property type="protein sequence ID" value="BAB33685.1"/>
    <property type="molecule type" value="Genomic_DNA"/>
</dbReference>
<dbReference type="PIR" id="D85512">
    <property type="entry name" value="D85512"/>
</dbReference>
<dbReference type="PIR" id="F90661">
    <property type="entry name" value="F90661"/>
</dbReference>
<dbReference type="RefSeq" id="NP_308289.1">
    <property type="nucleotide sequence ID" value="NC_002695.1"/>
</dbReference>
<dbReference type="SMR" id="Q8X7P0"/>
<dbReference type="STRING" id="155864.Z0296"/>
<dbReference type="GeneID" id="914358"/>
<dbReference type="KEGG" id="ece:Z0296"/>
<dbReference type="KEGG" id="ecs:ECs_0262"/>
<dbReference type="PATRIC" id="fig|386585.9.peg.364"/>
<dbReference type="eggNOG" id="COG1690">
    <property type="taxonomic scope" value="Bacteria"/>
</dbReference>
<dbReference type="HOGENOM" id="CLU_2522548_0_0_6"/>
<dbReference type="Proteomes" id="UP000000558">
    <property type="component" value="Chromosome"/>
</dbReference>
<dbReference type="Proteomes" id="UP000002519">
    <property type="component" value="Chromosome"/>
</dbReference>
<dbReference type="GO" id="GO:0006396">
    <property type="term" value="P:RNA processing"/>
    <property type="evidence" value="ECO:0007669"/>
    <property type="project" value="InterPro"/>
</dbReference>
<dbReference type="Gene3D" id="3.90.1860.10">
    <property type="entry name" value="tRNA-splicing ligase RtcB"/>
    <property type="match status" value="1"/>
</dbReference>
<dbReference type="InterPro" id="IPR036025">
    <property type="entry name" value="RtcB-like_sf"/>
</dbReference>
<dbReference type="SUPFAM" id="SSF103365">
    <property type="entry name" value="Hypothetical protein PH1602"/>
    <property type="match status" value="1"/>
</dbReference>
<feature type="chain" id="PRO_0000168553" description="Uncharacterized protein YkfJ">
    <location>
        <begin position="1"/>
        <end position="88"/>
    </location>
</feature>